<reference key="1">
    <citation type="journal article" date="2006" name="Appl. Environ. Microbiol.">
        <title>Complete genome sequence of the marine, chemolithoautotrophic, ammonia-oxidizing bacterium Nitrosococcus oceani ATCC 19707.</title>
        <authorList>
            <person name="Klotz M.G."/>
            <person name="Arp D.J."/>
            <person name="Chain P.S.G."/>
            <person name="El-Sheikh A.F."/>
            <person name="Hauser L.J."/>
            <person name="Hommes N.G."/>
            <person name="Larimer F.W."/>
            <person name="Malfatti S.A."/>
            <person name="Norton J.M."/>
            <person name="Poret-Peterson A.T."/>
            <person name="Vergez L.M."/>
            <person name="Ward B.B."/>
        </authorList>
    </citation>
    <scope>NUCLEOTIDE SEQUENCE [LARGE SCALE GENOMIC DNA]</scope>
    <source>
        <strain>ATCC 19707 / BCRC 17464 / JCM 30415 / NCIMB 11848 / C-107</strain>
    </source>
</reference>
<feature type="chain" id="PRO_0000147924" description="Phosphoglucosamine mutase">
    <location>
        <begin position="1"/>
        <end position="451"/>
    </location>
</feature>
<feature type="active site" description="Phosphoserine intermediate" evidence="1">
    <location>
        <position position="101"/>
    </location>
</feature>
<feature type="binding site" description="via phosphate group" evidence="1">
    <location>
        <position position="101"/>
    </location>
    <ligand>
        <name>Mg(2+)</name>
        <dbReference type="ChEBI" id="CHEBI:18420"/>
    </ligand>
</feature>
<feature type="binding site" evidence="1">
    <location>
        <position position="240"/>
    </location>
    <ligand>
        <name>Mg(2+)</name>
        <dbReference type="ChEBI" id="CHEBI:18420"/>
    </ligand>
</feature>
<feature type="binding site" evidence="1">
    <location>
        <position position="242"/>
    </location>
    <ligand>
        <name>Mg(2+)</name>
        <dbReference type="ChEBI" id="CHEBI:18420"/>
    </ligand>
</feature>
<feature type="binding site" evidence="1">
    <location>
        <position position="244"/>
    </location>
    <ligand>
        <name>Mg(2+)</name>
        <dbReference type="ChEBI" id="CHEBI:18420"/>
    </ligand>
</feature>
<feature type="modified residue" description="Phosphoserine" evidence="1">
    <location>
        <position position="101"/>
    </location>
</feature>
<evidence type="ECO:0000255" key="1">
    <source>
        <dbReference type="HAMAP-Rule" id="MF_01554"/>
    </source>
</evidence>
<proteinExistence type="inferred from homology"/>
<gene>
    <name evidence="1" type="primary">glmM</name>
    <name type="ordered locus">Noc_2567</name>
</gene>
<keyword id="KW-0413">Isomerase</keyword>
<keyword id="KW-0460">Magnesium</keyword>
<keyword id="KW-0479">Metal-binding</keyword>
<keyword id="KW-0597">Phosphoprotein</keyword>
<keyword id="KW-1185">Reference proteome</keyword>
<organism>
    <name type="scientific">Nitrosococcus oceani (strain ATCC 19707 / BCRC 17464 / JCM 30415 / NCIMB 11848 / C-107)</name>
    <dbReference type="NCBI Taxonomy" id="323261"/>
    <lineage>
        <taxon>Bacteria</taxon>
        <taxon>Pseudomonadati</taxon>
        <taxon>Pseudomonadota</taxon>
        <taxon>Gammaproteobacteria</taxon>
        <taxon>Chromatiales</taxon>
        <taxon>Chromatiaceae</taxon>
        <taxon>Nitrosococcus</taxon>
    </lineage>
</organism>
<accession>Q3J826</accession>
<name>GLMM_NITOC</name>
<dbReference type="EC" id="5.4.2.10" evidence="1"/>
<dbReference type="EMBL" id="CP000127">
    <property type="protein sequence ID" value="ABA59020.1"/>
    <property type="molecule type" value="Genomic_DNA"/>
</dbReference>
<dbReference type="RefSeq" id="WP_004269168.1">
    <property type="nucleotide sequence ID" value="NC_007484.1"/>
</dbReference>
<dbReference type="SMR" id="Q3J826"/>
<dbReference type="FunCoup" id="Q3J826">
    <property type="interactions" value="427"/>
</dbReference>
<dbReference type="STRING" id="323261.Noc_2567"/>
<dbReference type="KEGG" id="noc:Noc_2567"/>
<dbReference type="eggNOG" id="COG1109">
    <property type="taxonomic scope" value="Bacteria"/>
</dbReference>
<dbReference type="HOGENOM" id="CLU_016950_7_0_6"/>
<dbReference type="InParanoid" id="Q3J826"/>
<dbReference type="Proteomes" id="UP000006838">
    <property type="component" value="Chromosome"/>
</dbReference>
<dbReference type="GO" id="GO:0005829">
    <property type="term" value="C:cytosol"/>
    <property type="evidence" value="ECO:0007669"/>
    <property type="project" value="TreeGrafter"/>
</dbReference>
<dbReference type="GO" id="GO:0000287">
    <property type="term" value="F:magnesium ion binding"/>
    <property type="evidence" value="ECO:0007669"/>
    <property type="project" value="UniProtKB-UniRule"/>
</dbReference>
<dbReference type="GO" id="GO:0008966">
    <property type="term" value="F:phosphoglucosamine mutase activity"/>
    <property type="evidence" value="ECO:0007669"/>
    <property type="project" value="UniProtKB-UniRule"/>
</dbReference>
<dbReference type="GO" id="GO:0004615">
    <property type="term" value="F:phosphomannomutase activity"/>
    <property type="evidence" value="ECO:0007669"/>
    <property type="project" value="TreeGrafter"/>
</dbReference>
<dbReference type="GO" id="GO:0005975">
    <property type="term" value="P:carbohydrate metabolic process"/>
    <property type="evidence" value="ECO:0007669"/>
    <property type="project" value="InterPro"/>
</dbReference>
<dbReference type="GO" id="GO:0009252">
    <property type="term" value="P:peptidoglycan biosynthetic process"/>
    <property type="evidence" value="ECO:0007669"/>
    <property type="project" value="TreeGrafter"/>
</dbReference>
<dbReference type="GO" id="GO:0006048">
    <property type="term" value="P:UDP-N-acetylglucosamine biosynthetic process"/>
    <property type="evidence" value="ECO:0007669"/>
    <property type="project" value="TreeGrafter"/>
</dbReference>
<dbReference type="CDD" id="cd05802">
    <property type="entry name" value="GlmM"/>
    <property type="match status" value="1"/>
</dbReference>
<dbReference type="FunFam" id="3.30.310.50:FF:000001">
    <property type="entry name" value="Phosphoglucosamine mutase"/>
    <property type="match status" value="1"/>
</dbReference>
<dbReference type="FunFam" id="3.40.120.10:FF:000001">
    <property type="entry name" value="Phosphoglucosamine mutase"/>
    <property type="match status" value="1"/>
</dbReference>
<dbReference type="FunFam" id="3.40.120.10:FF:000003">
    <property type="entry name" value="Phosphoglucosamine mutase"/>
    <property type="match status" value="1"/>
</dbReference>
<dbReference type="Gene3D" id="3.40.120.10">
    <property type="entry name" value="Alpha-D-Glucose-1,6-Bisphosphate, subunit A, domain 3"/>
    <property type="match status" value="3"/>
</dbReference>
<dbReference type="Gene3D" id="3.30.310.50">
    <property type="entry name" value="Alpha-D-phosphohexomutase, C-terminal domain"/>
    <property type="match status" value="1"/>
</dbReference>
<dbReference type="HAMAP" id="MF_01554_B">
    <property type="entry name" value="GlmM_B"/>
    <property type="match status" value="1"/>
</dbReference>
<dbReference type="InterPro" id="IPR005844">
    <property type="entry name" value="A-D-PHexomutase_a/b/a-I"/>
</dbReference>
<dbReference type="InterPro" id="IPR016055">
    <property type="entry name" value="A-D-PHexomutase_a/b/a-I/II/III"/>
</dbReference>
<dbReference type="InterPro" id="IPR005845">
    <property type="entry name" value="A-D-PHexomutase_a/b/a-II"/>
</dbReference>
<dbReference type="InterPro" id="IPR005846">
    <property type="entry name" value="A-D-PHexomutase_a/b/a-III"/>
</dbReference>
<dbReference type="InterPro" id="IPR005843">
    <property type="entry name" value="A-D-PHexomutase_C"/>
</dbReference>
<dbReference type="InterPro" id="IPR036900">
    <property type="entry name" value="A-D-PHexomutase_C_sf"/>
</dbReference>
<dbReference type="InterPro" id="IPR016066">
    <property type="entry name" value="A-D-PHexomutase_CS"/>
</dbReference>
<dbReference type="InterPro" id="IPR005841">
    <property type="entry name" value="Alpha-D-phosphohexomutase_SF"/>
</dbReference>
<dbReference type="InterPro" id="IPR006352">
    <property type="entry name" value="GlmM_bact"/>
</dbReference>
<dbReference type="InterPro" id="IPR050060">
    <property type="entry name" value="Phosphoglucosamine_mutase"/>
</dbReference>
<dbReference type="NCBIfam" id="TIGR01455">
    <property type="entry name" value="glmM"/>
    <property type="match status" value="1"/>
</dbReference>
<dbReference type="NCBIfam" id="NF008139">
    <property type="entry name" value="PRK10887.1"/>
    <property type="match status" value="1"/>
</dbReference>
<dbReference type="PANTHER" id="PTHR42946:SF1">
    <property type="entry name" value="PHOSPHOGLUCOMUTASE (ALPHA-D-GLUCOSE-1,6-BISPHOSPHATE-DEPENDENT)"/>
    <property type="match status" value="1"/>
</dbReference>
<dbReference type="PANTHER" id="PTHR42946">
    <property type="entry name" value="PHOSPHOHEXOSE MUTASE"/>
    <property type="match status" value="1"/>
</dbReference>
<dbReference type="Pfam" id="PF02878">
    <property type="entry name" value="PGM_PMM_I"/>
    <property type="match status" value="1"/>
</dbReference>
<dbReference type="Pfam" id="PF02879">
    <property type="entry name" value="PGM_PMM_II"/>
    <property type="match status" value="1"/>
</dbReference>
<dbReference type="Pfam" id="PF02880">
    <property type="entry name" value="PGM_PMM_III"/>
    <property type="match status" value="1"/>
</dbReference>
<dbReference type="Pfam" id="PF00408">
    <property type="entry name" value="PGM_PMM_IV"/>
    <property type="match status" value="1"/>
</dbReference>
<dbReference type="PRINTS" id="PR00509">
    <property type="entry name" value="PGMPMM"/>
</dbReference>
<dbReference type="SUPFAM" id="SSF55957">
    <property type="entry name" value="Phosphoglucomutase, C-terminal domain"/>
    <property type="match status" value="1"/>
</dbReference>
<dbReference type="SUPFAM" id="SSF53738">
    <property type="entry name" value="Phosphoglucomutase, first 3 domains"/>
    <property type="match status" value="3"/>
</dbReference>
<dbReference type="PROSITE" id="PS00710">
    <property type="entry name" value="PGM_PMM"/>
    <property type="match status" value="1"/>
</dbReference>
<comment type="function">
    <text evidence="1">Catalyzes the conversion of glucosamine-6-phosphate to glucosamine-1-phosphate.</text>
</comment>
<comment type="catalytic activity">
    <reaction evidence="1">
        <text>alpha-D-glucosamine 1-phosphate = D-glucosamine 6-phosphate</text>
        <dbReference type="Rhea" id="RHEA:23424"/>
        <dbReference type="ChEBI" id="CHEBI:58516"/>
        <dbReference type="ChEBI" id="CHEBI:58725"/>
        <dbReference type="EC" id="5.4.2.10"/>
    </reaction>
</comment>
<comment type="cofactor">
    <cofactor evidence="1">
        <name>Mg(2+)</name>
        <dbReference type="ChEBI" id="CHEBI:18420"/>
    </cofactor>
    <text evidence="1">Binds 1 Mg(2+) ion per subunit.</text>
</comment>
<comment type="PTM">
    <text evidence="1">Activated by phosphorylation.</text>
</comment>
<comment type="similarity">
    <text evidence="1">Belongs to the phosphohexose mutase family.</text>
</comment>
<protein>
    <recommendedName>
        <fullName evidence="1">Phosphoglucosamine mutase</fullName>
        <ecNumber evidence="1">5.4.2.10</ecNumber>
    </recommendedName>
</protein>
<sequence>MEKKYFGTDGIRGKVGERPITPDFILHLGWAVGRVLAQGRQSKVLIGKDTRISGYMFESALQAGLSAAGVDIRLLGPMPTPAIAYLTRTLHAKAGIVISASHNPYYDNGIKFFSSAGTKLPDEIEVAIEAELEKPMQTATSSRLGKAERVVDAAGRYIEFCKSTGPASVDLSELRLVLDCAHGATYQVAPEVFAEMGADITVIGASPNGLNINENCGSTALESLQHKVLECKADVGIALDGDGDRVIMIDQRGEIVDGDDILYIIARARQRTSKLTGAVVGTLMSNLGLEKALATLGIPLMRSQVGDRYVLEMLQCNGYSLGGESSGHIICLDRTTTGDGIVSALQVLVEMVATGHSLYELKSGVVKYPQCLINVQVARSINLHDNNAIINAMQEAENQLGDEGRVLLRPSGTEPVVRVMVEGRDISQVNSLAQQLAQEVAFHLGNPQICP</sequence>